<evidence type="ECO:0000250" key="1">
    <source>
        <dbReference type="UniProtKB" id="Q61660"/>
    </source>
</evidence>
<evidence type="ECO:0000255" key="2">
    <source>
        <dbReference type="PROSITE-ProRule" id="PRU00089"/>
    </source>
</evidence>
<evidence type="ECO:0000256" key="3">
    <source>
        <dbReference type="SAM" id="MobiDB-lite"/>
    </source>
</evidence>
<evidence type="ECO:0000269" key="4">
    <source>
    </source>
</evidence>
<evidence type="ECO:0000303" key="5">
    <source>
    </source>
</evidence>
<evidence type="ECO:0000305" key="6"/>
<name>FOXJ1_RAT</name>
<organism>
    <name type="scientific">Rattus norvegicus</name>
    <name type="common">Rat</name>
    <dbReference type="NCBI Taxonomy" id="10116"/>
    <lineage>
        <taxon>Eukaryota</taxon>
        <taxon>Metazoa</taxon>
        <taxon>Chordata</taxon>
        <taxon>Craniata</taxon>
        <taxon>Vertebrata</taxon>
        <taxon>Euteleostomi</taxon>
        <taxon>Mammalia</taxon>
        <taxon>Eutheria</taxon>
        <taxon>Euarchontoglires</taxon>
        <taxon>Glires</taxon>
        <taxon>Rodentia</taxon>
        <taxon>Myomorpha</taxon>
        <taxon>Muroidea</taxon>
        <taxon>Muridae</taxon>
        <taxon>Murinae</taxon>
        <taxon>Rattus</taxon>
    </lineage>
</organism>
<comment type="function">
    <text evidence="1">Transcription factor specifically required for the formation of motile cilia. Acts by activating transcription of genes that mediate assembly of motile cilia, such as CFAP157. Binds the DNA consensus sequences 5'-HWDTGTTTGTTTA-3' or 5'-KTTTGTTGTTKTW-3' (where H is not G, W is A or T, D is not C, and K is G or T). Activates the transcription of a variety of ciliary proteins in the developing brain and lung.</text>
</comment>
<comment type="subcellular location">
    <subcellularLocation>
        <location evidence="1">Nucleus</location>
    </subcellularLocation>
</comment>
<comment type="tissue specificity">
    <text evidence="4">Pulmonary epithelium, testis and oviduct.</text>
</comment>
<comment type="similarity">
    <text evidence="6">Belongs to the FOXJ1 family.</text>
</comment>
<dbReference type="EMBL" id="L36388">
    <property type="protein sequence ID" value="AAC37671.1"/>
    <property type="molecule type" value="mRNA"/>
</dbReference>
<dbReference type="RefSeq" id="NP_446284.1">
    <property type="nucleotide sequence ID" value="NM_053832.1"/>
</dbReference>
<dbReference type="SMR" id="Q63247"/>
<dbReference type="FunCoup" id="Q63247">
    <property type="interactions" value="135"/>
</dbReference>
<dbReference type="PhosphoSitePlus" id="Q63247"/>
<dbReference type="GeneID" id="116557"/>
<dbReference type="KEGG" id="rno:116557"/>
<dbReference type="AGR" id="RGD:621764"/>
<dbReference type="CTD" id="2302"/>
<dbReference type="RGD" id="621764">
    <property type="gene designation" value="Foxj1"/>
</dbReference>
<dbReference type="InParanoid" id="Q63247"/>
<dbReference type="PhylomeDB" id="Q63247"/>
<dbReference type="PRO" id="PR:Q63247"/>
<dbReference type="Proteomes" id="UP000002494">
    <property type="component" value="Unplaced"/>
</dbReference>
<dbReference type="GO" id="GO:0005634">
    <property type="term" value="C:nucleus"/>
    <property type="evidence" value="ECO:0000250"/>
    <property type="project" value="UniProtKB"/>
</dbReference>
<dbReference type="GO" id="GO:0001228">
    <property type="term" value="F:DNA-binding transcription activator activity, RNA polymerase II-specific"/>
    <property type="evidence" value="ECO:0000250"/>
    <property type="project" value="UniProtKB"/>
</dbReference>
<dbReference type="GO" id="GO:0000981">
    <property type="term" value="F:DNA-binding transcription factor activity, RNA polymerase II-specific"/>
    <property type="evidence" value="ECO:0000318"/>
    <property type="project" value="GO_Central"/>
</dbReference>
<dbReference type="GO" id="GO:0000978">
    <property type="term" value="F:RNA polymerase II cis-regulatory region sequence-specific DNA binding"/>
    <property type="evidence" value="ECO:0000266"/>
    <property type="project" value="RGD"/>
</dbReference>
<dbReference type="GO" id="GO:0000976">
    <property type="term" value="F:transcription cis-regulatory region binding"/>
    <property type="evidence" value="ECO:0000266"/>
    <property type="project" value="RGD"/>
</dbReference>
<dbReference type="GO" id="GO:0030036">
    <property type="term" value="P:actin cytoskeleton organization"/>
    <property type="evidence" value="ECO:0000266"/>
    <property type="project" value="RGD"/>
</dbReference>
<dbReference type="GO" id="GO:0035082">
    <property type="term" value="P:axoneme assembly"/>
    <property type="evidence" value="ECO:0000250"/>
    <property type="project" value="UniProtKB"/>
</dbReference>
<dbReference type="GO" id="GO:0007420">
    <property type="term" value="P:brain development"/>
    <property type="evidence" value="ECO:0000266"/>
    <property type="project" value="RGD"/>
</dbReference>
<dbReference type="GO" id="GO:0048469">
    <property type="term" value="P:cell maturation"/>
    <property type="evidence" value="ECO:0000266"/>
    <property type="project" value="RGD"/>
</dbReference>
<dbReference type="GO" id="GO:1990314">
    <property type="term" value="P:cellular response to insulin-like growth factor stimulus"/>
    <property type="evidence" value="ECO:0000270"/>
    <property type="project" value="RGD"/>
</dbReference>
<dbReference type="GO" id="GO:0002508">
    <property type="term" value="P:central tolerance induction"/>
    <property type="evidence" value="ECO:0000266"/>
    <property type="project" value="RGD"/>
</dbReference>
<dbReference type="GO" id="GO:0032053">
    <property type="term" value="P:ciliary basal body organization"/>
    <property type="evidence" value="ECO:0000250"/>
    <property type="project" value="UniProtKB"/>
</dbReference>
<dbReference type="GO" id="GO:0060271">
    <property type="term" value="P:cilium assembly"/>
    <property type="evidence" value="ECO:0000250"/>
    <property type="project" value="UniProtKB"/>
</dbReference>
<dbReference type="GO" id="GO:0007368">
    <property type="term" value="P:determination of left/right symmetry"/>
    <property type="evidence" value="ECO:0000250"/>
    <property type="project" value="UniProtKB"/>
</dbReference>
<dbReference type="GO" id="GO:0060429">
    <property type="term" value="P:epithelium development"/>
    <property type="evidence" value="ECO:0000266"/>
    <property type="project" value="RGD"/>
</dbReference>
<dbReference type="GO" id="GO:0035089">
    <property type="term" value="P:establishment of apical/basal cell polarity"/>
    <property type="evidence" value="ECO:0000266"/>
    <property type="project" value="RGD"/>
</dbReference>
<dbReference type="GO" id="GO:0072016">
    <property type="term" value="P:glomerular parietal epithelial cell development"/>
    <property type="evidence" value="ECO:0000266"/>
    <property type="project" value="RGD"/>
</dbReference>
<dbReference type="GO" id="GO:0007507">
    <property type="term" value="P:heart development"/>
    <property type="evidence" value="ECO:0000266"/>
    <property type="project" value="RGD"/>
</dbReference>
<dbReference type="GO" id="GO:0006959">
    <property type="term" value="P:humoral immune response"/>
    <property type="evidence" value="ECO:0000266"/>
    <property type="project" value="RGD"/>
</dbReference>
<dbReference type="GO" id="GO:0060972">
    <property type="term" value="P:left/right pattern formation"/>
    <property type="evidence" value="ECO:0000266"/>
    <property type="project" value="RGD"/>
</dbReference>
<dbReference type="GO" id="GO:0050900">
    <property type="term" value="P:leukocyte migration"/>
    <property type="evidence" value="ECO:0000266"/>
    <property type="project" value="RGD"/>
</dbReference>
<dbReference type="GO" id="GO:0060428">
    <property type="term" value="P:lung epithelium development"/>
    <property type="evidence" value="ECO:0000266"/>
    <property type="project" value="RGD"/>
</dbReference>
<dbReference type="GO" id="GO:0035502">
    <property type="term" value="P:metanephric part of ureteric bud development"/>
    <property type="evidence" value="ECO:0000266"/>
    <property type="project" value="RGD"/>
</dbReference>
<dbReference type="GO" id="GO:0044458">
    <property type="term" value="P:motile cilium assembly"/>
    <property type="evidence" value="ECO:0000266"/>
    <property type="project" value="RGD"/>
</dbReference>
<dbReference type="GO" id="GO:0050869">
    <property type="term" value="P:negative regulation of B cell activation"/>
    <property type="evidence" value="ECO:0000266"/>
    <property type="project" value="RGD"/>
</dbReference>
<dbReference type="GO" id="GO:0002635">
    <property type="term" value="P:negative regulation of germinal center formation"/>
    <property type="evidence" value="ECO:0000266"/>
    <property type="project" value="RGD"/>
</dbReference>
<dbReference type="GO" id="GO:0002924">
    <property type="term" value="P:negative regulation of humoral immune response mediated by circulating immunoglobulin"/>
    <property type="evidence" value="ECO:0000266"/>
    <property type="project" value="RGD"/>
</dbReference>
<dbReference type="GO" id="GO:0032715">
    <property type="term" value="P:negative regulation of interleukin-6 production"/>
    <property type="evidence" value="ECO:0000266"/>
    <property type="project" value="RGD"/>
</dbReference>
<dbReference type="GO" id="GO:0033085">
    <property type="term" value="P:negative regulation of T cell differentiation in thymus"/>
    <property type="evidence" value="ECO:0000266"/>
    <property type="project" value="RGD"/>
</dbReference>
<dbReference type="GO" id="GO:0042130">
    <property type="term" value="P:negative regulation of T cell proliferation"/>
    <property type="evidence" value="ECO:0000266"/>
    <property type="project" value="RGD"/>
</dbReference>
<dbReference type="GO" id="GO:0000122">
    <property type="term" value="P:negative regulation of transcription by RNA polymerase II"/>
    <property type="evidence" value="ECO:0000266"/>
    <property type="project" value="RGD"/>
</dbReference>
<dbReference type="GO" id="GO:0002897">
    <property type="term" value="P:positive regulation of central B cell tolerance induction"/>
    <property type="evidence" value="ECO:0000266"/>
    <property type="project" value="RGD"/>
</dbReference>
<dbReference type="GO" id="GO:0045893">
    <property type="term" value="P:positive regulation of DNA-templated transcription"/>
    <property type="evidence" value="ECO:0000250"/>
    <property type="project" value="UniProtKB"/>
</dbReference>
<dbReference type="GO" id="GO:1901248">
    <property type="term" value="P:positive regulation of lung ciliated cell differentiation"/>
    <property type="evidence" value="ECO:0000266"/>
    <property type="project" value="RGD"/>
</dbReference>
<dbReference type="GO" id="GO:0045944">
    <property type="term" value="P:positive regulation of transcription by RNA polymerase II"/>
    <property type="evidence" value="ECO:0000250"/>
    <property type="project" value="UniProtKB"/>
</dbReference>
<dbReference type="GO" id="GO:0008104">
    <property type="term" value="P:protein localization"/>
    <property type="evidence" value="ECO:0000250"/>
    <property type="project" value="UniProtKB"/>
</dbReference>
<dbReference type="GO" id="GO:0030856">
    <property type="term" value="P:regulation of epithelial cell differentiation"/>
    <property type="evidence" value="ECO:0000266"/>
    <property type="project" value="RGD"/>
</dbReference>
<dbReference type="GO" id="GO:0006357">
    <property type="term" value="P:regulation of transcription by RNA polymerase II"/>
    <property type="evidence" value="ECO:0000318"/>
    <property type="project" value="GO_Central"/>
</dbReference>
<dbReference type="GO" id="GO:1904612">
    <property type="term" value="P:response to 2,3,7,8-tetrachlorodibenzodioxine"/>
    <property type="evidence" value="ECO:0000270"/>
    <property type="project" value="RGD"/>
</dbReference>
<dbReference type="GO" id="GO:0032355">
    <property type="term" value="P:response to estradiol"/>
    <property type="evidence" value="ECO:0000270"/>
    <property type="project" value="RGD"/>
</dbReference>
<dbReference type="GO" id="GO:0007283">
    <property type="term" value="P:spermatogenesis"/>
    <property type="evidence" value="ECO:0000270"/>
    <property type="project" value="RGD"/>
</dbReference>
<dbReference type="CDD" id="cd20023">
    <property type="entry name" value="FH_FOXJ1"/>
    <property type="match status" value="1"/>
</dbReference>
<dbReference type="FunFam" id="1.10.10.10:FF:000030">
    <property type="entry name" value="Forkhead box protein K2"/>
    <property type="match status" value="1"/>
</dbReference>
<dbReference type="Gene3D" id="1.10.10.10">
    <property type="entry name" value="Winged helix-like DNA-binding domain superfamily/Winged helix DNA-binding domain"/>
    <property type="match status" value="1"/>
</dbReference>
<dbReference type="InterPro" id="IPR047512">
    <property type="entry name" value="FH_FOXJ1"/>
</dbReference>
<dbReference type="InterPro" id="IPR001766">
    <property type="entry name" value="Fork_head_dom"/>
</dbReference>
<dbReference type="InterPro" id="IPR047513">
    <property type="entry name" value="FOXJ1"/>
</dbReference>
<dbReference type="InterPro" id="IPR018122">
    <property type="entry name" value="TF_fork_head_CS_1"/>
</dbReference>
<dbReference type="InterPro" id="IPR030456">
    <property type="entry name" value="TF_fork_head_CS_2"/>
</dbReference>
<dbReference type="InterPro" id="IPR036388">
    <property type="entry name" value="WH-like_DNA-bd_sf"/>
</dbReference>
<dbReference type="InterPro" id="IPR036390">
    <property type="entry name" value="WH_DNA-bd_sf"/>
</dbReference>
<dbReference type="PANTHER" id="PTHR46805">
    <property type="entry name" value="FORKHEAD BOX PROTEIN J1"/>
    <property type="match status" value="1"/>
</dbReference>
<dbReference type="PANTHER" id="PTHR46805:SF1">
    <property type="entry name" value="FORKHEAD BOX PROTEIN J1"/>
    <property type="match status" value="1"/>
</dbReference>
<dbReference type="Pfam" id="PF00250">
    <property type="entry name" value="Forkhead"/>
    <property type="match status" value="1"/>
</dbReference>
<dbReference type="PRINTS" id="PR00053">
    <property type="entry name" value="FORKHEAD"/>
</dbReference>
<dbReference type="SMART" id="SM00339">
    <property type="entry name" value="FH"/>
    <property type="match status" value="1"/>
</dbReference>
<dbReference type="SUPFAM" id="SSF46785">
    <property type="entry name" value="Winged helix' DNA-binding domain"/>
    <property type="match status" value="1"/>
</dbReference>
<dbReference type="PROSITE" id="PS00657">
    <property type="entry name" value="FORK_HEAD_1"/>
    <property type="match status" value="1"/>
</dbReference>
<dbReference type="PROSITE" id="PS00658">
    <property type="entry name" value="FORK_HEAD_2"/>
    <property type="match status" value="1"/>
</dbReference>
<dbReference type="PROSITE" id="PS50039">
    <property type="entry name" value="FORK_HEAD_3"/>
    <property type="match status" value="1"/>
</dbReference>
<feature type="chain" id="PRO_0000091852" description="Forkhead box protein J1">
    <location>
        <begin position="1"/>
        <end position="421"/>
    </location>
</feature>
<feature type="DNA-binding region" description="Fork-head" evidence="2">
    <location>
        <begin position="120"/>
        <end position="210"/>
    </location>
</feature>
<feature type="region of interest" description="Disordered" evidence="3">
    <location>
        <begin position="1"/>
        <end position="32"/>
    </location>
</feature>
<feature type="region of interest" description="Disordered" evidence="3">
    <location>
        <begin position="79"/>
        <end position="110"/>
    </location>
</feature>
<feature type="region of interest" description="Disordered" evidence="3">
    <location>
        <begin position="256"/>
        <end position="277"/>
    </location>
</feature>
<feature type="compositionally biased region" description="Gly residues" evidence="3">
    <location>
        <begin position="11"/>
        <end position="21"/>
    </location>
</feature>
<feature type="compositionally biased region" description="Polar residues" evidence="3">
    <location>
        <begin position="90"/>
        <end position="99"/>
    </location>
</feature>
<feature type="compositionally biased region" description="Gly residues" evidence="3">
    <location>
        <begin position="259"/>
        <end position="268"/>
    </location>
</feature>
<keyword id="KW-0010">Activator</keyword>
<keyword id="KW-0970">Cilium biogenesis/degradation</keyword>
<keyword id="KW-0238">DNA-binding</keyword>
<keyword id="KW-0539">Nucleus</keyword>
<keyword id="KW-1185">Reference proteome</keyword>
<keyword id="KW-0804">Transcription</keyword>
<keyword id="KW-0805">Transcription regulation</keyword>
<accession>Q63247</accession>
<protein>
    <recommendedName>
        <fullName>Forkhead box protein J1</fullName>
    </recommendedName>
    <alternativeName>
        <fullName evidence="5">Hepatocyte nuclear factor 3 forkhead homolog 4</fullName>
        <shortName evidence="5">HFH-4</shortName>
    </alternativeName>
</protein>
<sequence>MAESWLRLCGAGPGEEAGPEGGMEEPDALDDSLTSLQWLQEFSILNAKAPTLPPGGTDPLGYHQVPGLVAPGSPLAADPACLGQPHTPGKPTSSCTSRSAPPGLQAPPPDDVDYATNPHVKPPYSYATLICMAMQASKATKITLSAIYKWITDNFCYFRHADPTWQNSIRHNLSLNKCFIKVPREKDEPGKGGFWRIDPQYAERLLSGAFKKRRLPPVHIHPAFARQAAQEPSTAPWGGPLTVNREAQQLLQEFEEATGEGGWGTGEGRLGHKRKQPLPKRVAKVLRPPSTLLLTQEEQGELEPLKGNFDWEAIFEAGALGEELSSLEGLELSPPLSPSSHGEVDLTVHGRHINCPATWGPPVEQATDSLDFDETFLATSFLQHPWDESSSGCLPPEPLFEAGDATLAADLQDWASVGAFL</sequence>
<proteinExistence type="evidence at transcript level"/>
<gene>
    <name type="primary">Foxj1</name>
    <name evidence="5" type="synonym">Hfh4</name>
</gene>
<reference key="1">
    <citation type="journal article" date="1995" name="Proc. Natl. Acad. Sci. U.S.A.">
        <title>Primary structure of hepatocyte nuclear factor/forkhead homologue 4 and characterization of gene expression in the developing respiratory and reproductive epithelium.</title>
        <authorList>
            <person name="Hackett B.P."/>
            <person name="Brody S.L."/>
            <person name="Liang M."/>
            <person name="Zeitz I.D."/>
            <person name="Bruns L.A."/>
            <person name="Gitlin J.D."/>
        </authorList>
    </citation>
    <scope>NUCLEOTIDE SEQUENCE [MRNA]</scope>
    <scope>TISSUE SPECIFICITY</scope>
    <source>
        <strain>Sprague-Dawley</strain>
        <tissue>Testis</tissue>
    </source>
</reference>